<reference key="1">
    <citation type="submission" date="2005-08" db="EMBL/GenBank/DDBJ databases">
        <authorList>
            <consortium name="NIH - Mammalian Gene Collection (MGC) project"/>
        </authorList>
    </citation>
    <scope>NUCLEOTIDE SEQUENCE [LARGE SCALE MRNA]</scope>
    <source>
        <strain>Crossbred X Angus</strain>
        <tissue>Ileum</tissue>
    </source>
</reference>
<keyword id="KW-0007">Acetylation</keyword>
<keyword id="KW-0067">ATP-binding</keyword>
<keyword id="KW-0963">Cytoplasm</keyword>
<keyword id="KW-0347">Helicase</keyword>
<keyword id="KW-0378">Hydrolase</keyword>
<keyword id="KW-1017">Isopeptide bond</keyword>
<keyword id="KW-0547">Nucleotide-binding</keyword>
<keyword id="KW-0539">Nucleus</keyword>
<keyword id="KW-1185">Reference proteome</keyword>
<keyword id="KW-0694">RNA-binding</keyword>
<keyword id="KW-0832">Ubl conjugation</keyword>
<dbReference type="EC" id="3.6.4.13" evidence="3"/>
<dbReference type="EMBL" id="BC103093">
    <property type="protein sequence ID" value="AAI03094.1"/>
    <property type="molecule type" value="mRNA"/>
</dbReference>
<dbReference type="RefSeq" id="NP_001029743.1">
    <property type="nucleotide sequence ID" value="NM_001034571.2"/>
</dbReference>
<dbReference type="SMR" id="Q3ZBV2"/>
<dbReference type="FunCoup" id="Q3ZBV2">
    <property type="interactions" value="4190"/>
</dbReference>
<dbReference type="STRING" id="9913.ENSBTAP00000004645"/>
<dbReference type="PaxDb" id="9913-ENSBTAP00000004645"/>
<dbReference type="PeptideAtlas" id="Q3ZBV2"/>
<dbReference type="GeneID" id="529929"/>
<dbReference type="KEGG" id="bta:529929"/>
<dbReference type="CTD" id="55308"/>
<dbReference type="VEuPathDB" id="HostDB:ENSBTAG00000003570"/>
<dbReference type="eggNOG" id="KOG0332">
    <property type="taxonomic scope" value="Eukaryota"/>
</dbReference>
<dbReference type="HOGENOM" id="CLU_003041_1_0_1"/>
<dbReference type="InParanoid" id="Q3ZBV2"/>
<dbReference type="OMA" id="REYAIME"/>
<dbReference type="OrthoDB" id="10265785at2759"/>
<dbReference type="TreeFam" id="TF314957"/>
<dbReference type="Proteomes" id="UP000009136">
    <property type="component" value="Chromosome 18"/>
</dbReference>
<dbReference type="Bgee" id="ENSBTAG00000003570">
    <property type="expression patterns" value="Expressed in milk and 105 other cell types or tissues"/>
</dbReference>
<dbReference type="GO" id="GO:0010494">
    <property type="term" value="C:cytoplasmic stress granule"/>
    <property type="evidence" value="ECO:0000318"/>
    <property type="project" value="GO_Central"/>
</dbReference>
<dbReference type="GO" id="GO:0005654">
    <property type="term" value="C:nucleoplasm"/>
    <property type="evidence" value="ECO:0007669"/>
    <property type="project" value="UniProtKB-SubCell"/>
</dbReference>
<dbReference type="GO" id="GO:0005634">
    <property type="term" value="C:nucleus"/>
    <property type="evidence" value="ECO:0000318"/>
    <property type="project" value="GO_Central"/>
</dbReference>
<dbReference type="GO" id="GO:0005524">
    <property type="term" value="F:ATP binding"/>
    <property type="evidence" value="ECO:0007669"/>
    <property type="project" value="UniProtKB-KW"/>
</dbReference>
<dbReference type="GO" id="GO:0016887">
    <property type="term" value="F:ATP hydrolysis activity"/>
    <property type="evidence" value="ECO:0007669"/>
    <property type="project" value="RHEA"/>
</dbReference>
<dbReference type="GO" id="GO:0003729">
    <property type="term" value="F:mRNA binding"/>
    <property type="evidence" value="ECO:0000318"/>
    <property type="project" value="GO_Central"/>
</dbReference>
<dbReference type="GO" id="GO:0003724">
    <property type="term" value="F:RNA helicase activity"/>
    <property type="evidence" value="ECO:0000318"/>
    <property type="project" value="GO_Central"/>
</dbReference>
<dbReference type="GO" id="GO:0016973">
    <property type="term" value="P:poly(A)+ mRNA export from nucleus"/>
    <property type="evidence" value="ECO:0000318"/>
    <property type="project" value="GO_Central"/>
</dbReference>
<dbReference type="CDD" id="cd18787">
    <property type="entry name" value="SF2_C_DEAD"/>
    <property type="match status" value="1"/>
</dbReference>
<dbReference type="FunFam" id="3.40.50.300:FF:000318">
    <property type="entry name" value="ATP-dependent RNA helicase DDX19B"/>
    <property type="match status" value="1"/>
</dbReference>
<dbReference type="FunFam" id="3.40.50.300:FF:000357">
    <property type="entry name" value="ATP-dependent RNA helicase DDX19B"/>
    <property type="match status" value="1"/>
</dbReference>
<dbReference type="Gene3D" id="6.10.250.2170">
    <property type="match status" value="1"/>
</dbReference>
<dbReference type="Gene3D" id="3.40.50.300">
    <property type="entry name" value="P-loop containing nucleotide triphosphate hydrolases"/>
    <property type="match status" value="2"/>
</dbReference>
<dbReference type="InterPro" id="IPR011545">
    <property type="entry name" value="DEAD/DEAH_box_helicase_dom"/>
</dbReference>
<dbReference type="InterPro" id="IPR014001">
    <property type="entry name" value="Helicase_ATP-bd"/>
</dbReference>
<dbReference type="InterPro" id="IPR001650">
    <property type="entry name" value="Helicase_C-like"/>
</dbReference>
<dbReference type="InterPro" id="IPR027417">
    <property type="entry name" value="P-loop_NTPase"/>
</dbReference>
<dbReference type="InterPro" id="IPR014014">
    <property type="entry name" value="RNA_helicase_DEAD_Q_motif"/>
</dbReference>
<dbReference type="PANTHER" id="PTHR47958">
    <property type="entry name" value="ATP-DEPENDENT RNA HELICASE DBP3"/>
    <property type="match status" value="1"/>
</dbReference>
<dbReference type="Pfam" id="PF00270">
    <property type="entry name" value="DEAD"/>
    <property type="match status" value="1"/>
</dbReference>
<dbReference type="Pfam" id="PF00271">
    <property type="entry name" value="Helicase_C"/>
    <property type="match status" value="1"/>
</dbReference>
<dbReference type="SMART" id="SM00487">
    <property type="entry name" value="DEXDc"/>
    <property type="match status" value="1"/>
</dbReference>
<dbReference type="SMART" id="SM00490">
    <property type="entry name" value="HELICc"/>
    <property type="match status" value="1"/>
</dbReference>
<dbReference type="SUPFAM" id="SSF52540">
    <property type="entry name" value="P-loop containing nucleoside triphosphate hydrolases"/>
    <property type="match status" value="1"/>
</dbReference>
<dbReference type="PROSITE" id="PS51192">
    <property type="entry name" value="HELICASE_ATP_BIND_1"/>
    <property type="match status" value="1"/>
</dbReference>
<dbReference type="PROSITE" id="PS51194">
    <property type="entry name" value="HELICASE_CTER"/>
    <property type="match status" value="1"/>
</dbReference>
<dbReference type="PROSITE" id="PS51195">
    <property type="entry name" value="Q_MOTIF"/>
    <property type="match status" value="1"/>
</dbReference>
<organism>
    <name type="scientific">Bos taurus</name>
    <name type="common">Bovine</name>
    <dbReference type="NCBI Taxonomy" id="9913"/>
    <lineage>
        <taxon>Eukaryota</taxon>
        <taxon>Metazoa</taxon>
        <taxon>Chordata</taxon>
        <taxon>Craniata</taxon>
        <taxon>Vertebrata</taxon>
        <taxon>Euteleostomi</taxon>
        <taxon>Mammalia</taxon>
        <taxon>Eutheria</taxon>
        <taxon>Laurasiatheria</taxon>
        <taxon>Artiodactyla</taxon>
        <taxon>Ruminantia</taxon>
        <taxon>Pecora</taxon>
        <taxon>Bovidae</taxon>
        <taxon>Bovinae</taxon>
        <taxon>Bos</taxon>
    </lineage>
</organism>
<evidence type="ECO:0000250" key="1"/>
<evidence type="ECO:0000250" key="2">
    <source>
        <dbReference type="UniProtKB" id="Q9NUU7"/>
    </source>
</evidence>
<evidence type="ECO:0000250" key="3">
    <source>
        <dbReference type="UniProtKB" id="Q9UMR2"/>
    </source>
</evidence>
<evidence type="ECO:0000255" key="4">
    <source>
        <dbReference type="PROSITE-ProRule" id="PRU00541"/>
    </source>
</evidence>
<evidence type="ECO:0000255" key="5">
    <source>
        <dbReference type="PROSITE-ProRule" id="PRU00542"/>
    </source>
</evidence>
<evidence type="ECO:0000256" key="6">
    <source>
        <dbReference type="SAM" id="MobiDB-lite"/>
    </source>
</evidence>
<evidence type="ECO:0000305" key="7"/>
<protein>
    <recommendedName>
        <fullName>ATP-dependent RNA helicase DDX19A</fullName>
        <ecNumber evidence="3">3.6.4.13</ecNumber>
    </recommendedName>
    <alternativeName>
        <fullName>DEAD box protein 19A</fullName>
    </alternativeName>
</protein>
<proteinExistence type="evidence at transcript level"/>
<feature type="initiator methionine" description="Removed" evidence="2">
    <location>
        <position position="1"/>
    </location>
</feature>
<feature type="chain" id="PRO_0000282323" description="ATP-dependent RNA helicase DDX19A">
    <location>
        <begin position="2"/>
        <end position="478"/>
    </location>
</feature>
<feature type="domain" description="Helicase ATP-binding" evidence="4">
    <location>
        <begin position="124"/>
        <end position="294"/>
    </location>
</feature>
<feature type="domain" description="Helicase C-terminal" evidence="5">
    <location>
        <begin position="305"/>
        <end position="473"/>
    </location>
</feature>
<feature type="region of interest" description="N-terminal lobe" evidence="1">
    <location>
        <begin position="2"/>
        <end position="299"/>
    </location>
</feature>
<feature type="region of interest" description="Disordered" evidence="6">
    <location>
        <begin position="31"/>
        <end position="55"/>
    </location>
</feature>
<feature type="region of interest" description="N-terminal helix" evidence="1">
    <location>
        <begin position="54"/>
        <end position="67"/>
    </location>
</feature>
<feature type="region of interest" description="C-terminal lobe" evidence="1">
    <location>
        <begin position="300"/>
        <end position="478"/>
    </location>
</feature>
<feature type="short sequence motif" description="Q motif">
    <location>
        <begin position="91"/>
        <end position="119"/>
    </location>
</feature>
<feature type="short sequence motif" description="DEAD box">
    <location>
        <begin position="241"/>
        <end position="244"/>
    </location>
</feature>
<feature type="binding site" evidence="1">
    <location>
        <position position="118"/>
    </location>
    <ligand>
        <name>ATP</name>
        <dbReference type="ChEBI" id="CHEBI:30616"/>
    </ligand>
</feature>
<feature type="binding site" evidence="4">
    <location>
        <begin position="137"/>
        <end position="144"/>
    </location>
    <ligand>
        <name>ATP</name>
        <dbReference type="ChEBI" id="CHEBI:30616"/>
    </ligand>
</feature>
<feature type="binding site" evidence="1">
    <location>
        <position position="428"/>
    </location>
    <ligand>
        <name>ATP</name>
        <dbReference type="ChEBI" id="CHEBI:30616"/>
    </ligand>
</feature>
<feature type="binding site" evidence="1">
    <location>
        <position position="431"/>
    </location>
    <ligand>
        <name>ATP</name>
        <dbReference type="ChEBI" id="CHEBI:30616"/>
    </ligand>
</feature>
<feature type="modified residue" description="N-acetylalanine" evidence="2">
    <location>
        <position position="2"/>
    </location>
</feature>
<feature type="cross-link" description="Glycyl lysine isopeptide (Lys-Gly) (interchain with G-Cter in SUMO1); alternate" evidence="2">
    <location>
        <position position="26"/>
    </location>
</feature>
<feature type="cross-link" description="Glycyl lysine isopeptide (Lys-Gly) (interchain with G-Cter in SUMO2); alternate" evidence="2">
    <location>
        <position position="26"/>
    </location>
</feature>
<accession>Q3ZBV2</accession>
<sequence>MATDSWALAVDEQEAAVKSMSNLQIKEEKVKPDTNGVIKTNATPEKTDEEEKEDRAAQSLLNKLIRSNLVDNTNQVEVLQRDPNSPLYSVKSFEELRLKPQLLQGVYAMGFNRPSKIQENALPMMLAEPPQNLIAQSQSGTGKTAAFVLAMLSRVEPAERYPQCLCLSPTYELALQTGKVIEQMGKFHPELKLAYAVRGNKLERGQKISEHIVIGTPGTVLDWCSKLKFIDPKKIKVFVLDEADVMIATQGHQDQSIRIQRMLPRNCQMLLFSATFEDSVWKFAQKVVPDPNIIKLKREEETLDTIKQYYVLCNSRDEKFQALCNIYGAITIAQAMIFCHTRKTASWLAAELSKEGHQVALLSGEMVVEQRAAVIERFREGKEKVLVTTNVCARGIDVEQVSVVINFDLPVDKDGNPDNETYLHRIGRTGRFGKRGLAVNMVDSKHSMNILNRIQEHFNKKIERLDTDDLDEIEKIAN</sequence>
<gene>
    <name type="primary">DDX19A</name>
</gene>
<comment type="function">
    <text evidence="3">ATP-dependent RNA helicase involved in mRNA export from the nucleus. Rather than unwinding RNA duplexes, DDX19 functions as a remodeler of ribonucleoprotein particles, whereby proteins bound to nuclear mRNA are dissociated and replaced by cytoplasmic mRNA binding proteins.</text>
</comment>
<comment type="catalytic activity">
    <reaction evidence="3">
        <text>ATP + H2O = ADP + phosphate + H(+)</text>
        <dbReference type="Rhea" id="RHEA:13065"/>
        <dbReference type="ChEBI" id="CHEBI:15377"/>
        <dbReference type="ChEBI" id="CHEBI:15378"/>
        <dbReference type="ChEBI" id="CHEBI:30616"/>
        <dbReference type="ChEBI" id="CHEBI:43474"/>
        <dbReference type="ChEBI" id="CHEBI:456216"/>
        <dbReference type="EC" id="3.6.4.13"/>
    </reaction>
</comment>
<comment type="subcellular location">
    <subcellularLocation>
        <location evidence="3">Cytoplasm</location>
    </subcellularLocation>
    <subcellularLocation>
        <location evidence="3">Nucleus</location>
        <location evidence="3">Nucleoplasm</location>
    </subcellularLocation>
    <text evidence="3">Associates with the nuclear pore complex cytoplasmic fibrils.</text>
</comment>
<comment type="domain">
    <text evidence="1">The N-terminal extension helix acts as an autoinhibitory domain, preventing ATP hydrolysis, unless the N-terminus of the protein is displaced by RNA binding, allowing cleft closure to bring key side chains into position for catalysis.</text>
</comment>
<comment type="similarity">
    <text evidence="7">Belongs to the DEAD box helicase family. DDX19/DBP5 subfamily.</text>
</comment>
<name>DD19A_BOVIN</name>